<accession>P62255</accession>
<accession>Q99462</accession>
<evidence type="ECO:0000250" key="1">
    <source>
        <dbReference type="UniProtKB" id="P62253"/>
    </source>
</evidence>
<evidence type="ECO:0000255" key="2">
    <source>
        <dbReference type="PROSITE-ProRule" id="PRU00388"/>
    </source>
</evidence>
<evidence type="ECO:0000255" key="3">
    <source>
        <dbReference type="PROSITE-ProRule" id="PRU10133"/>
    </source>
</evidence>
<evidence type="ECO:0000269" key="4">
    <source>
    </source>
</evidence>
<name>UB2G1_RAT</name>
<dbReference type="EC" id="2.3.2.23"/>
<dbReference type="EMBL" id="AF099093">
    <property type="protein sequence ID" value="AAC69605.1"/>
    <property type="molecule type" value="mRNA"/>
</dbReference>
<dbReference type="EMBL" id="BC086980">
    <property type="protein sequence ID" value="AAH86980.1"/>
    <property type="molecule type" value="mRNA"/>
</dbReference>
<dbReference type="RefSeq" id="NP_073181.1">
    <property type="nucleotide sequence ID" value="NM_022690.2"/>
</dbReference>
<dbReference type="SMR" id="P62255"/>
<dbReference type="FunCoup" id="P62255">
    <property type="interactions" value="3355"/>
</dbReference>
<dbReference type="IntAct" id="P62255">
    <property type="interactions" value="1"/>
</dbReference>
<dbReference type="STRING" id="10116.ENSRNOP00000013486"/>
<dbReference type="PhosphoSitePlus" id="P62255"/>
<dbReference type="jPOST" id="P62255"/>
<dbReference type="PaxDb" id="10116-ENSRNOP00000013486"/>
<dbReference type="Ensembl" id="ENSRNOT00000013486.5">
    <property type="protein sequence ID" value="ENSRNOP00000013486.4"/>
    <property type="gene ID" value="ENSRNOG00000010041.7"/>
</dbReference>
<dbReference type="GeneID" id="64631"/>
<dbReference type="KEGG" id="rno:64631"/>
<dbReference type="AGR" id="RGD:620392"/>
<dbReference type="CTD" id="7326"/>
<dbReference type="RGD" id="620392">
    <property type="gene designation" value="Ube2g1"/>
</dbReference>
<dbReference type="eggNOG" id="KOG0425">
    <property type="taxonomic scope" value="Eukaryota"/>
</dbReference>
<dbReference type="GeneTree" id="ENSGT00940000155228"/>
<dbReference type="HOGENOM" id="CLU_030988_10_1_1"/>
<dbReference type="InParanoid" id="P62255"/>
<dbReference type="OrthoDB" id="19692at2759"/>
<dbReference type="PhylomeDB" id="P62255"/>
<dbReference type="TreeFam" id="TF101118"/>
<dbReference type="Reactome" id="R-RNO-8866652">
    <property type="pathway name" value="Synthesis of active ubiquitin: roles of E1 and E2 enzymes"/>
</dbReference>
<dbReference type="Reactome" id="R-RNO-983168">
    <property type="pathway name" value="Antigen processing: Ubiquitination &amp; Proteasome degradation"/>
</dbReference>
<dbReference type="UniPathway" id="UPA00143"/>
<dbReference type="PRO" id="PR:P62255"/>
<dbReference type="Proteomes" id="UP000002494">
    <property type="component" value="Chromosome 10"/>
</dbReference>
<dbReference type="Bgee" id="ENSRNOG00000010041">
    <property type="expression patterns" value="Expressed in quadriceps femoris and 20 other cell types or tissues"/>
</dbReference>
<dbReference type="GO" id="GO:0005524">
    <property type="term" value="F:ATP binding"/>
    <property type="evidence" value="ECO:0007669"/>
    <property type="project" value="UniProtKB-KW"/>
</dbReference>
<dbReference type="GO" id="GO:0061631">
    <property type="term" value="F:ubiquitin conjugating enzyme activity"/>
    <property type="evidence" value="ECO:0000266"/>
    <property type="project" value="RGD"/>
</dbReference>
<dbReference type="GO" id="GO:0031625">
    <property type="term" value="F:ubiquitin protein ligase binding"/>
    <property type="evidence" value="ECO:0000266"/>
    <property type="project" value="RGD"/>
</dbReference>
<dbReference type="GO" id="GO:0004842">
    <property type="term" value="F:ubiquitin-protein transferase activity"/>
    <property type="evidence" value="ECO:0000314"/>
    <property type="project" value="RGD"/>
</dbReference>
<dbReference type="GO" id="GO:0043161">
    <property type="term" value="P:proteasome-mediated ubiquitin-dependent protein catabolic process"/>
    <property type="evidence" value="ECO:0000318"/>
    <property type="project" value="GO_Central"/>
</dbReference>
<dbReference type="GO" id="GO:0070936">
    <property type="term" value="P:protein K48-linked ubiquitination"/>
    <property type="evidence" value="ECO:0000250"/>
    <property type="project" value="UniProtKB"/>
</dbReference>
<dbReference type="GO" id="GO:0070534">
    <property type="term" value="P:protein K63-linked ubiquitination"/>
    <property type="evidence" value="ECO:0000250"/>
    <property type="project" value="UniProtKB"/>
</dbReference>
<dbReference type="GO" id="GO:0000209">
    <property type="term" value="P:protein polyubiquitination"/>
    <property type="evidence" value="ECO:0000318"/>
    <property type="project" value="GO_Central"/>
</dbReference>
<dbReference type="GO" id="GO:0016567">
    <property type="term" value="P:protein ubiquitination"/>
    <property type="evidence" value="ECO:0000304"/>
    <property type="project" value="RGD"/>
</dbReference>
<dbReference type="GO" id="GO:0006511">
    <property type="term" value="P:ubiquitin-dependent protein catabolic process"/>
    <property type="evidence" value="ECO:0000304"/>
    <property type="project" value="RGD"/>
</dbReference>
<dbReference type="CDD" id="cd23795">
    <property type="entry name" value="UBCc_UBE2G1"/>
    <property type="match status" value="1"/>
</dbReference>
<dbReference type="FunFam" id="3.10.110.10:FF:000018">
    <property type="entry name" value="Ubiquitin-conjugating enzyme E2 G1"/>
    <property type="match status" value="1"/>
</dbReference>
<dbReference type="Gene3D" id="3.10.110.10">
    <property type="entry name" value="Ubiquitin Conjugating Enzyme"/>
    <property type="match status" value="1"/>
</dbReference>
<dbReference type="InterPro" id="IPR050113">
    <property type="entry name" value="Ub_conjugating_enzyme"/>
</dbReference>
<dbReference type="InterPro" id="IPR000608">
    <property type="entry name" value="UBQ-conjugat_E2_core"/>
</dbReference>
<dbReference type="InterPro" id="IPR023313">
    <property type="entry name" value="UBQ-conjugating_AS"/>
</dbReference>
<dbReference type="InterPro" id="IPR016135">
    <property type="entry name" value="UBQ-conjugating_enzyme/RWD"/>
</dbReference>
<dbReference type="PANTHER" id="PTHR24067">
    <property type="entry name" value="UBIQUITIN-CONJUGATING ENZYME E2"/>
    <property type="match status" value="1"/>
</dbReference>
<dbReference type="Pfam" id="PF00179">
    <property type="entry name" value="UQ_con"/>
    <property type="match status" value="1"/>
</dbReference>
<dbReference type="SMART" id="SM00212">
    <property type="entry name" value="UBCc"/>
    <property type="match status" value="1"/>
</dbReference>
<dbReference type="SUPFAM" id="SSF54495">
    <property type="entry name" value="UBC-like"/>
    <property type="match status" value="1"/>
</dbReference>
<dbReference type="PROSITE" id="PS00183">
    <property type="entry name" value="UBC_1"/>
    <property type="match status" value="1"/>
</dbReference>
<dbReference type="PROSITE" id="PS50127">
    <property type="entry name" value="UBC_2"/>
    <property type="match status" value="1"/>
</dbReference>
<gene>
    <name type="primary">Ube2g1</name>
    <name type="synonym">Ubc7</name>
    <name type="synonym">Ube2g</name>
</gene>
<keyword id="KW-0007">Acetylation</keyword>
<keyword id="KW-0067">ATP-binding</keyword>
<keyword id="KW-0547">Nucleotide-binding</keyword>
<keyword id="KW-1185">Reference proteome</keyword>
<keyword id="KW-0808">Transferase</keyword>
<keyword id="KW-0832">Ubl conjugation</keyword>
<keyword id="KW-0833">Ubl conjugation pathway</keyword>
<protein>
    <recommendedName>
        <fullName>Ubiquitin-conjugating enzyme E2 G1</fullName>
        <ecNumber>2.3.2.23</ecNumber>
    </recommendedName>
    <alternativeName>
        <fullName>E2 ubiquitin-conjugating enzyme G1</fullName>
    </alternativeName>
    <alternativeName>
        <fullName>E217K</fullName>
    </alternativeName>
    <alternativeName>
        <fullName>UBC7</fullName>
    </alternativeName>
    <alternativeName>
        <fullName>Ubiquitin carrier protein G1</fullName>
    </alternativeName>
    <alternativeName>
        <fullName>Ubiquitin-protein ligase G1</fullName>
    </alternativeName>
    <component>
        <recommendedName>
            <fullName>Ubiquitin-conjugating enzyme E2 G1, N-terminally processed</fullName>
        </recommendedName>
    </component>
</protein>
<sequence length="170" mass="19509">MTELQSALLLRRQLAELNKNPVEGFSAGLIDDNDLYRWEVLIIGPPDTLYEGGVFKAHLTFPKDYPLRPPKMKFITEIWHPNVDKNGDVCISILHEPGEDKYGYEKPEERWLPIHTVETIMISVISMLADPNGDSPANVDAAKEWREDRNGEFKRKVARCVRKSQETAFE</sequence>
<proteinExistence type="evidence at transcript level"/>
<feature type="chain" id="PRO_0000424517" description="Ubiquitin-conjugating enzyme E2 G1">
    <location>
        <begin position="1"/>
        <end position="170"/>
    </location>
</feature>
<feature type="initiator methionine" description="Removed; alternate" evidence="1">
    <location>
        <position position="1"/>
    </location>
</feature>
<feature type="chain" id="PRO_0000082482" description="Ubiquitin-conjugating enzyme E2 G1, N-terminally processed">
    <location>
        <begin position="2"/>
        <end position="170"/>
    </location>
</feature>
<feature type="domain" description="UBC core" evidence="2">
    <location>
        <begin position="5"/>
        <end position="166"/>
    </location>
</feature>
<feature type="active site" description="Glycyl thioester intermediate" evidence="2 3">
    <location>
        <position position="90"/>
    </location>
</feature>
<feature type="modified residue" description="N-acetylmethionine" evidence="1">
    <location>
        <position position="1"/>
    </location>
</feature>
<feature type="modified residue" description="N-acetylthreonine; in Ubiquitin-conjugating enzyme E2 G1, N-terminally processed" evidence="1">
    <location>
        <position position="2"/>
    </location>
</feature>
<organism>
    <name type="scientific">Rattus norvegicus</name>
    <name type="common">Rat</name>
    <dbReference type="NCBI Taxonomy" id="10116"/>
    <lineage>
        <taxon>Eukaryota</taxon>
        <taxon>Metazoa</taxon>
        <taxon>Chordata</taxon>
        <taxon>Craniata</taxon>
        <taxon>Vertebrata</taxon>
        <taxon>Euteleostomi</taxon>
        <taxon>Mammalia</taxon>
        <taxon>Eutheria</taxon>
        <taxon>Euarchontoglires</taxon>
        <taxon>Glires</taxon>
        <taxon>Rodentia</taxon>
        <taxon>Myomorpha</taxon>
        <taxon>Muroidea</taxon>
        <taxon>Muridae</taxon>
        <taxon>Murinae</taxon>
        <taxon>Rattus</taxon>
    </lineage>
</organism>
<comment type="function">
    <text evidence="1">Accepts ubiquitin from the E1 complex and catalyzes its covalent attachment to other proteins. In vitro catalyzes 'Lys-48'-, as well as 'Lys-63'-linked polyubiquitination. May be involved in degradation of muscle-specific proteins. Mediates polyubiquitination of CYP3A4.</text>
</comment>
<comment type="catalytic activity">
    <reaction evidence="1 2 3">
        <text>S-ubiquitinyl-[E1 ubiquitin-activating enzyme]-L-cysteine + [E2 ubiquitin-conjugating enzyme]-L-cysteine = [E1 ubiquitin-activating enzyme]-L-cysteine + S-ubiquitinyl-[E2 ubiquitin-conjugating enzyme]-L-cysteine.</text>
        <dbReference type="EC" id="2.3.2.23"/>
    </reaction>
</comment>
<comment type="pathway">
    <text evidence="2">Protein modification; protein ubiquitination.</text>
</comment>
<comment type="tissue specificity">
    <text evidence="4">Widely expressed, with higher level in testis.</text>
</comment>
<comment type="developmental stage">
    <text>Induced from days 15 to 30.</text>
</comment>
<comment type="PTM">
    <text evidence="1">Autoubiquitinated.</text>
</comment>
<comment type="similarity">
    <text evidence="2">Belongs to the ubiquitin-conjugating enzyme family.</text>
</comment>
<reference key="1">
    <citation type="journal article" date="1999" name="J. Biol. Chem.">
        <title>Identification of rabbit reticulocyte E217K as a UBC7 homologue and functional characterization of its core domain loop.</title>
        <authorList>
            <person name="Lin H."/>
            <person name="Wing S.S."/>
        </authorList>
    </citation>
    <scope>NUCLEOTIDE SEQUENCE [MRNA]</scope>
    <scope>TISSUE SPECIFICITY</scope>
</reference>
<reference key="2">
    <citation type="journal article" date="2004" name="Genome Res.">
        <title>The status, quality, and expansion of the NIH full-length cDNA project: the Mammalian Gene Collection (MGC).</title>
        <authorList>
            <consortium name="The MGC Project Team"/>
        </authorList>
    </citation>
    <scope>NUCLEOTIDE SEQUENCE [LARGE SCALE MRNA]</scope>
    <source>
        <tissue>Heart</tissue>
    </source>
</reference>